<comment type="function">
    <text evidence="1">NDH-1 shuttles electrons from NADH, via FMN and iron-sulfur (Fe-S) centers, to quinones in the respiratory chain. The immediate electron acceptor for the enzyme in this species is believed to be ubiquinone. Couples the redox reaction to proton translocation (for every two electrons transferred, four hydrogen ions are translocated across the cytoplasmic membrane), and thus conserves the redox energy in a proton gradient.</text>
</comment>
<comment type="catalytic activity">
    <reaction evidence="1">
        <text>a quinone + NADH + 5 H(+)(in) = a quinol + NAD(+) + 4 H(+)(out)</text>
        <dbReference type="Rhea" id="RHEA:57888"/>
        <dbReference type="ChEBI" id="CHEBI:15378"/>
        <dbReference type="ChEBI" id="CHEBI:24646"/>
        <dbReference type="ChEBI" id="CHEBI:57540"/>
        <dbReference type="ChEBI" id="CHEBI:57945"/>
        <dbReference type="ChEBI" id="CHEBI:132124"/>
    </reaction>
</comment>
<comment type="subunit">
    <text evidence="1">NDH-1 is composed of 13 different subunits. Subunits NuoA, H, J, K, L, M, N constitute the membrane sector of the complex.</text>
</comment>
<comment type="subcellular location">
    <subcellularLocation>
        <location evidence="1">Cell inner membrane</location>
        <topology evidence="1">Multi-pass membrane protein</topology>
    </subcellularLocation>
</comment>
<comment type="similarity">
    <text evidence="1">Belongs to the complex I subunit 3 family.</text>
</comment>
<organism>
    <name type="scientific">Salmonella typhimurium (strain LT2 / SGSC1412 / ATCC 700720)</name>
    <dbReference type="NCBI Taxonomy" id="99287"/>
    <lineage>
        <taxon>Bacteria</taxon>
        <taxon>Pseudomonadati</taxon>
        <taxon>Pseudomonadota</taxon>
        <taxon>Gammaproteobacteria</taxon>
        <taxon>Enterobacterales</taxon>
        <taxon>Enterobacteriaceae</taxon>
        <taxon>Salmonella</taxon>
    </lineage>
</organism>
<protein>
    <recommendedName>
        <fullName evidence="1">NADH-quinone oxidoreductase subunit A</fullName>
        <ecNumber evidence="1">7.1.1.-</ecNumber>
    </recommendedName>
    <alternativeName>
        <fullName evidence="1">NADH dehydrogenase I subunit A</fullName>
    </alternativeName>
    <alternativeName>
        <fullName evidence="1">NDH-1 subunit A</fullName>
    </alternativeName>
    <alternativeName>
        <fullName evidence="1">NUO1</fullName>
    </alternativeName>
</protein>
<name>NUOA_SALTY</name>
<proteinExistence type="inferred from homology"/>
<reference key="1">
    <citation type="journal article" date="2001" name="Nature">
        <title>Complete genome sequence of Salmonella enterica serovar Typhimurium LT2.</title>
        <authorList>
            <person name="McClelland M."/>
            <person name="Sanderson K.E."/>
            <person name="Spieth J."/>
            <person name="Clifton S.W."/>
            <person name="Latreille P."/>
            <person name="Courtney L."/>
            <person name="Porwollik S."/>
            <person name="Ali J."/>
            <person name="Dante M."/>
            <person name="Du F."/>
            <person name="Hou S."/>
            <person name="Layman D."/>
            <person name="Leonard S."/>
            <person name="Nguyen C."/>
            <person name="Scott K."/>
            <person name="Holmes A."/>
            <person name="Grewal N."/>
            <person name="Mulvaney E."/>
            <person name="Ryan E."/>
            <person name="Sun H."/>
            <person name="Florea L."/>
            <person name="Miller W."/>
            <person name="Stoneking T."/>
            <person name="Nhan M."/>
            <person name="Waterston R."/>
            <person name="Wilson R.K."/>
        </authorList>
    </citation>
    <scope>NUCLEOTIDE SEQUENCE [LARGE SCALE GENOMIC DNA]</scope>
    <source>
        <strain>LT2 / SGSC1412 / ATCC 700720</strain>
    </source>
</reference>
<evidence type="ECO:0000255" key="1">
    <source>
        <dbReference type="HAMAP-Rule" id="MF_01394"/>
    </source>
</evidence>
<keyword id="KW-0997">Cell inner membrane</keyword>
<keyword id="KW-1003">Cell membrane</keyword>
<keyword id="KW-0472">Membrane</keyword>
<keyword id="KW-0520">NAD</keyword>
<keyword id="KW-0874">Quinone</keyword>
<keyword id="KW-1185">Reference proteome</keyword>
<keyword id="KW-1278">Translocase</keyword>
<keyword id="KW-0812">Transmembrane</keyword>
<keyword id="KW-1133">Transmembrane helix</keyword>
<keyword id="KW-0813">Transport</keyword>
<keyword id="KW-0830">Ubiquinone</keyword>
<dbReference type="EC" id="7.1.1.-" evidence="1"/>
<dbReference type="EMBL" id="AE006468">
    <property type="protein sequence ID" value="AAL21229.1"/>
    <property type="molecule type" value="Genomic_DNA"/>
</dbReference>
<dbReference type="RefSeq" id="NP_461270.1">
    <property type="nucleotide sequence ID" value="NC_003197.2"/>
</dbReference>
<dbReference type="RefSeq" id="WP_000062993.1">
    <property type="nucleotide sequence ID" value="NC_003197.2"/>
</dbReference>
<dbReference type="SMR" id="Q7CQ49"/>
<dbReference type="STRING" id="99287.STM2328"/>
<dbReference type="PaxDb" id="99287-STM2328"/>
<dbReference type="GeneID" id="1253850"/>
<dbReference type="GeneID" id="66756777"/>
<dbReference type="KEGG" id="stm:STM2328"/>
<dbReference type="PATRIC" id="fig|99287.12.peg.2465"/>
<dbReference type="HOGENOM" id="CLU_119549_2_0_6"/>
<dbReference type="OMA" id="YVYAFLY"/>
<dbReference type="PhylomeDB" id="Q7CQ49"/>
<dbReference type="BioCyc" id="SENT99287:STM2328-MONOMER"/>
<dbReference type="Proteomes" id="UP000001014">
    <property type="component" value="Chromosome"/>
</dbReference>
<dbReference type="GO" id="GO:0005886">
    <property type="term" value="C:plasma membrane"/>
    <property type="evidence" value="ECO:0007669"/>
    <property type="project" value="UniProtKB-SubCell"/>
</dbReference>
<dbReference type="GO" id="GO:0045271">
    <property type="term" value="C:respiratory chain complex I"/>
    <property type="evidence" value="ECO:0000318"/>
    <property type="project" value="GO_Central"/>
</dbReference>
<dbReference type="GO" id="GO:0008137">
    <property type="term" value="F:NADH dehydrogenase (ubiquinone) activity"/>
    <property type="evidence" value="ECO:0000318"/>
    <property type="project" value="GO_Central"/>
</dbReference>
<dbReference type="GO" id="GO:0050136">
    <property type="term" value="F:NADH:ubiquinone reductase (non-electrogenic) activity"/>
    <property type="evidence" value="ECO:0007669"/>
    <property type="project" value="UniProtKB-UniRule"/>
</dbReference>
<dbReference type="GO" id="GO:0048038">
    <property type="term" value="F:quinone binding"/>
    <property type="evidence" value="ECO:0007669"/>
    <property type="project" value="UniProtKB-KW"/>
</dbReference>
<dbReference type="FunFam" id="1.20.58.1610:FF:000003">
    <property type="entry name" value="NADH-quinone oxidoreductase subunit A"/>
    <property type="match status" value="1"/>
</dbReference>
<dbReference type="Gene3D" id="1.20.58.1610">
    <property type="entry name" value="NADH:ubiquinone/plastoquinone oxidoreductase, chain 3"/>
    <property type="match status" value="1"/>
</dbReference>
<dbReference type="HAMAP" id="MF_01394">
    <property type="entry name" value="NDH1_NuoA"/>
    <property type="match status" value="1"/>
</dbReference>
<dbReference type="InterPro" id="IPR023043">
    <property type="entry name" value="NAD(P)H_OxRDtase_bac/plastid"/>
</dbReference>
<dbReference type="InterPro" id="IPR000440">
    <property type="entry name" value="NADH_UbQ/plastoQ_OxRdtase_su3"/>
</dbReference>
<dbReference type="InterPro" id="IPR038430">
    <property type="entry name" value="NDAH_ubi_oxred_su3_sf"/>
</dbReference>
<dbReference type="PANTHER" id="PTHR11058:SF21">
    <property type="entry name" value="NADH-QUINONE OXIDOREDUCTASE SUBUNIT A"/>
    <property type="match status" value="1"/>
</dbReference>
<dbReference type="PANTHER" id="PTHR11058">
    <property type="entry name" value="NADH-UBIQUINONE OXIDOREDUCTASE CHAIN 3"/>
    <property type="match status" value="1"/>
</dbReference>
<dbReference type="Pfam" id="PF00507">
    <property type="entry name" value="Oxidored_q4"/>
    <property type="match status" value="1"/>
</dbReference>
<feature type="chain" id="PRO_0000362776" description="NADH-quinone oxidoreductase subunit A">
    <location>
        <begin position="1"/>
        <end position="147"/>
    </location>
</feature>
<feature type="transmembrane region" description="Helical" evidence="1">
    <location>
        <begin position="16"/>
        <end position="36"/>
    </location>
</feature>
<feature type="transmembrane region" description="Helical" evidence="1">
    <location>
        <begin position="68"/>
        <end position="88"/>
    </location>
</feature>
<feature type="transmembrane region" description="Helical" evidence="1">
    <location>
        <begin position="97"/>
        <end position="117"/>
    </location>
</feature>
<sequence>MSMSTSTEVIAHHWAFAIFLIVAIGLCCLMLVGGWFLGGRARARHKNVPFESGIDSVGTARLRLSAKFYLVAMFFVIFDVEALYLFAWSTSIRESGWVGFVEAAIFIFVLLAGLVYLARIGALDWTPARSRRERMNPETNSIANRQR</sequence>
<accession>Q7CQ49</accession>
<gene>
    <name evidence="1" type="primary">nuoA</name>
    <name type="ordered locus">STM2328</name>
</gene>